<gene>
    <name type="primary">fbpB</name>
    <name type="ordered locus">MT1934</name>
</gene>
<dbReference type="EC" id="2.3.1.122"/>
<dbReference type="EC" id="2.3.1.20"/>
<dbReference type="EMBL" id="AE000516">
    <property type="protein sequence ID" value="AAK46207.1"/>
    <property type="status" value="ALT_INIT"/>
    <property type="molecule type" value="Genomic_DNA"/>
</dbReference>
<dbReference type="PIR" id="C70516">
    <property type="entry name" value="C70516"/>
</dbReference>
<dbReference type="RefSeq" id="WP_003409456.1">
    <property type="nucleotide sequence ID" value="NZ_KK341227.1"/>
</dbReference>
<dbReference type="SMR" id="P9WQP0"/>
<dbReference type="ESTHER" id="myctu-a85b">
    <property type="family name" value="A85-Mycolyl-transferase"/>
</dbReference>
<dbReference type="GeneID" id="45425859"/>
<dbReference type="KEGG" id="mtc:MT1934"/>
<dbReference type="PATRIC" id="fig|83331.31.peg.2082"/>
<dbReference type="HOGENOM" id="CLU_026624_3_1_11"/>
<dbReference type="Proteomes" id="UP000001020">
    <property type="component" value="Chromosome"/>
</dbReference>
<dbReference type="GO" id="GO:0005576">
    <property type="term" value="C:extracellular region"/>
    <property type="evidence" value="ECO:0007669"/>
    <property type="project" value="UniProtKB-SubCell"/>
</dbReference>
<dbReference type="GO" id="GO:0004144">
    <property type="term" value="F:diacylglycerol O-acyltransferase activity"/>
    <property type="evidence" value="ECO:0007669"/>
    <property type="project" value="UniProtKB-EC"/>
</dbReference>
<dbReference type="GO" id="GO:0050348">
    <property type="term" value="F:trehalose O-mycolyltransferase activity"/>
    <property type="evidence" value="ECO:0007669"/>
    <property type="project" value="UniProtKB-EC"/>
</dbReference>
<dbReference type="FunFam" id="3.40.50.1820:FF:000086">
    <property type="entry name" value="Diacylglycerol acyltransferase/mycolyltransferase Ag85C"/>
    <property type="match status" value="1"/>
</dbReference>
<dbReference type="Gene3D" id="3.40.50.1820">
    <property type="entry name" value="alpha/beta hydrolase"/>
    <property type="match status" value="1"/>
</dbReference>
<dbReference type="InterPro" id="IPR029058">
    <property type="entry name" value="AB_hydrolase_fold"/>
</dbReference>
<dbReference type="InterPro" id="IPR000801">
    <property type="entry name" value="Esterase-like"/>
</dbReference>
<dbReference type="InterPro" id="IPR050583">
    <property type="entry name" value="Mycobacterial_A85_antigen"/>
</dbReference>
<dbReference type="PANTHER" id="PTHR48098:SF1">
    <property type="entry name" value="DIACYLGLYCEROL ACYLTRANSFERASE_MYCOLYLTRANSFERASE AG85A"/>
    <property type="match status" value="1"/>
</dbReference>
<dbReference type="PANTHER" id="PTHR48098">
    <property type="entry name" value="ENTEROCHELIN ESTERASE-RELATED"/>
    <property type="match status" value="1"/>
</dbReference>
<dbReference type="Pfam" id="PF00756">
    <property type="entry name" value="Esterase"/>
    <property type="match status" value="1"/>
</dbReference>
<dbReference type="SUPFAM" id="SSF53474">
    <property type="entry name" value="alpha/beta-Hydrolases"/>
    <property type="match status" value="1"/>
</dbReference>
<feature type="signal peptide" evidence="2">
    <location>
        <begin position="1"/>
        <end position="40"/>
    </location>
</feature>
<feature type="chain" id="PRO_0000426742" description="Diacylglycerol acyltransferase/mycolyltransferase Ag85B">
    <location>
        <begin position="41"/>
        <end position="325"/>
    </location>
</feature>
<feature type="region of interest" description="Fibronectin-binding" evidence="1">
    <location>
        <begin position="98"/>
        <end position="108"/>
    </location>
</feature>
<feature type="active site" description="Nucleophile" evidence="1">
    <location>
        <position position="166"/>
    </location>
</feature>
<feature type="active site" evidence="1">
    <location>
        <position position="270"/>
    </location>
</feature>
<feature type="active site" evidence="1">
    <location>
        <position position="302"/>
    </location>
</feature>
<feature type="binding site" evidence="1">
    <location>
        <begin position="82"/>
        <end position="83"/>
    </location>
    <ligand>
        <name>substrate</name>
    </ligand>
</feature>
<feature type="binding site" evidence="1">
    <location>
        <position position="166"/>
    </location>
    <ligand>
        <name>substrate</name>
    </ligand>
</feature>
<feature type="binding site" evidence="1">
    <location>
        <position position="194"/>
    </location>
    <ligand>
        <name>substrate</name>
    </ligand>
</feature>
<feature type="binding site" evidence="1">
    <location>
        <begin position="272"/>
        <end position="275"/>
    </location>
    <ligand>
        <name>substrate</name>
    </ligand>
</feature>
<feature type="binding site" evidence="1">
    <location>
        <position position="279"/>
    </location>
    <ligand>
        <name>substrate</name>
    </ligand>
</feature>
<feature type="binding site" evidence="1">
    <location>
        <begin position="302"/>
        <end position="304"/>
    </location>
    <ligand>
        <name>substrate</name>
    </ligand>
</feature>
<feature type="disulfide bond" evidence="1">
    <location>
        <begin position="127"/>
        <end position="132"/>
    </location>
</feature>
<proteinExistence type="inferred from homology"/>
<sequence>MTDVSRKIRAWGRRLMIGTAAAVVLPGLVGLAGGAATAGAFSRPGLPVEYLQVPSPSMGRDIKVQFQSGGNNSPAVYLLDGLRAQDDYNGWDINTPAFEWYYQSGLSIVMPVGGQSSFYSDWYSPACGKAGCQTYKWETFLTSELPQWLSANRAVKPTGSAAIGLSMAGSSAMILAAYHPQQFIYAGSLSALLDPSQGMGPSLIGLAMGDAGGYKAADMWGPSSDPAWERNDPTQQIPKLVANNTRLWVYCGNGTPNELGGANIPAEFLENFVRSSNLKFQDAYNAAGGHNAVFNFPPNGTHSWEYWGAQLNAMKGDLQSSLGAG</sequence>
<accession>P9WQP0</accession>
<accession>D6MJP5</accession>
<accession>F2GHQ8</accession>
<accession>P0C5B9</accession>
<accession>P31952</accession>
<accession>Q9RMI0</accession>
<name>A85B_MYCTO</name>
<protein>
    <recommendedName>
        <fullName>Diacylglycerol acyltransferase/mycolyltransferase Ag85B</fullName>
        <shortName>DGAT</shortName>
        <ecNumber>2.3.1.122</ecNumber>
        <ecNumber>2.3.1.20</ecNumber>
    </recommendedName>
    <alternativeName>
        <fullName>30 kDa extracellular protein</fullName>
    </alternativeName>
    <alternativeName>
        <fullName>Acyl-CoA:diacylglycerol acyltransferase</fullName>
    </alternativeName>
    <alternativeName>
        <fullName>Antigen 85 complex B</fullName>
        <shortName>85B</shortName>
        <shortName>Ag85B</shortName>
    </alternativeName>
    <alternativeName>
        <fullName>Extracellular alpha-antigen</fullName>
    </alternativeName>
    <alternativeName>
        <fullName>Fibronectin-binding protein B</fullName>
        <shortName>Fbps B</shortName>
    </alternativeName>
</protein>
<organism>
    <name type="scientific">Mycobacterium tuberculosis (strain CDC 1551 / Oshkosh)</name>
    <dbReference type="NCBI Taxonomy" id="83331"/>
    <lineage>
        <taxon>Bacteria</taxon>
        <taxon>Bacillati</taxon>
        <taxon>Actinomycetota</taxon>
        <taxon>Actinomycetes</taxon>
        <taxon>Mycobacteriales</taxon>
        <taxon>Mycobacteriaceae</taxon>
        <taxon>Mycobacterium</taxon>
        <taxon>Mycobacterium tuberculosis complex</taxon>
    </lineage>
</organism>
<evidence type="ECO:0000250" key="1"/>
<evidence type="ECO:0000255" key="2"/>
<evidence type="ECO:0000305" key="3"/>
<reference key="1">
    <citation type="journal article" date="2002" name="J. Bacteriol.">
        <title>Whole-genome comparison of Mycobacterium tuberculosis clinical and laboratory strains.</title>
        <authorList>
            <person name="Fleischmann R.D."/>
            <person name="Alland D."/>
            <person name="Eisen J.A."/>
            <person name="Carpenter L."/>
            <person name="White O."/>
            <person name="Peterson J.D."/>
            <person name="DeBoy R.T."/>
            <person name="Dodson R.J."/>
            <person name="Gwinn M.L."/>
            <person name="Haft D.H."/>
            <person name="Hickey E.K."/>
            <person name="Kolonay J.F."/>
            <person name="Nelson W.C."/>
            <person name="Umayam L.A."/>
            <person name="Ermolaeva M.D."/>
            <person name="Salzberg S.L."/>
            <person name="Delcher A."/>
            <person name="Utterback T.R."/>
            <person name="Weidman J.F."/>
            <person name="Khouri H.M."/>
            <person name="Gill J."/>
            <person name="Mikula A."/>
            <person name="Bishai W."/>
            <person name="Jacobs W.R. Jr."/>
            <person name="Venter J.C."/>
            <person name="Fraser C.M."/>
        </authorList>
    </citation>
    <scope>NUCLEOTIDE SEQUENCE [LARGE SCALE GENOMIC DNA]</scope>
    <source>
        <strain>CDC 1551 / Oshkosh</strain>
    </source>
</reference>
<comment type="function">
    <text evidence="1">The antigen 85 proteins (FbpA, FbpB, FbpC) are responsible for the high affinity of mycobacteria for fibronectin, a large adhesive glycoprotein, which facilitates the attachment of M.tuberculosis to murine alveolar macrophages (AMs). They also help to maintain the integrity of the cell wall by catalyzing the transfer of mycolic acids to cell wall arabinogalactan and through the synthesis of alpha,alpha-trehalose dimycolate (TDM, cord factor). They catalyze the transfer of a mycoloyl residue from one molecule of alpha,alpha-trehalose monomycolate (TMM) to another TMM, leading to the formation of TDM (By similarity).</text>
</comment>
<comment type="catalytic activity">
    <reaction>
        <text>2 alpha,alpha'-trehalose 6-mycolate = alpha,alpha'-trehalose 6,6'-bismycolate + alpha,alpha-trehalose</text>
        <dbReference type="Rhea" id="RHEA:23472"/>
        <dbReference type="ChEBI" id="CHEBI:16551"/>
        <dbReference type="ChEBI" id="CHEBI:18195"/>
        <dbReference type="ChEBI" id="CHEBI:18234"/>
        <dbReference type="EC" id="2.3.1.122"/>
    </reaction>
</comment>
<comment type="catalytic activity">
    <reaction>
        <text>an acyl-CoA + a 1,2-diacyl-sn-glycerol = a triacyl-sn-glycerol + CoA</text>
        <dbReference type="Rhea" id="RHEA:10868"/>
        <dbReference type="ChEBI" id="CHEBI:17815"/>
        <dbReference type="ChEBI" id="CHEBI:57287"/>
        <dbReference type="ChEBI" id="CHEBI:58342"/>
        <dbReference type="ChEBI" id="CHEBI:64615"/>
        <dbReference type="EC" id="2.3.1.20"/>
    </reaction>
</comment>
<comment type="subcellular location">
    <subcellularLocation>
        <location evidence="1">Secreted</location>
    </subcellularLocation>
</comment>
<comment type="similarity">
    <text evidence="3">Belongs to the mycobacterial A85 antigen family.</text>
</comment>
<comment type="sequence caution" evidence="3">
    <conflict type="erroneous initiation">
        <sequence resource="EMBL-CDS" id="AAK46207"/>
    </conflict>
    <text>Extended N-terminus.</text>
</comment>
<keyword id="KW-0012">Acyltransferase</keyword>
<keyword id="KW-1015">Disulfide bond</keyword>
<keyword id="KW-1185">Reference proteome</keyword>
<keyword id="KW-0964">Secreted</keyword>
<keyword id="KW-0732">Signal</keyword>
<keyword id="KW-0808">Transferase</keyword>